<comment type="function">
    <text evidence="1">Plays a critical role in the incorporation of lipoproteins in the outer membrane after they are released by the LolA protein.</text>
</comment>
<comment type="subunit">
    <text evidence="1">Monomer.</text>
</comment>
<comment type="subcellular location">
    <subcellularLocation>
        <location evidence="1">Cell outer membrane</location>
        <topology evidence="1">Lipid-anchor</topology>
    </subcellularLocation>
</comment>
<comment type="similarity">
    <text evidence="1">Belongs to the LolB family.</text>
</comment>
<reference key="1">
    <citation type="journal article" date="2008" name="BMC Genomics">
        <title>The missing link: Bordetella petrii is endowed with both the metabolic versatility of environmental bacteria and virulence traits of pathogenic Bordetellae.</title>
        <authorList>
            <person name="Gross R."/>
            <person name="Guzman C.A."/>
            <person name="Sebaihia M."/>
            <person name="Martin dos Santos V.A.P."/>
            <person name="Pieper D.H."/>
            <person name="Koebnik R."/>
            <person name="Lechner M."/>
            <person name="Bartels D."/>
            <person name="Buhrmester J."/>
            <person name="Choudhuri J.V."/>
            <person name="Ebensen T."/>
            <person name="Gaigalat L."/>
            <person name="Herrmann S."/>
            <person name="Khachane A.N."/>
            <person name="Larisch C."/>
            <person name="Link S."/>
            <person name="Linke B."/>
            <person name="Meyer F."/>
            <person name="Mormann S."/>
            <person name="Nakunst D."/>
            <person name="Rueckert C."/>
            <person name="Schneiker-Bekel S."/>
            <person name="Schulze K."/>
            <person name="Voerholter F.-J."/>
            <person name="Yevsa T."/>
            <person name="Engle J.T."/>
            <person name="Goldman W.E."/>
            <person name="Puehler A."/>
            <person name="Goebel U.B."/>
            <person name="Goesmann A."/>
            <person name="Bloecker H."/>
            <person name="Kaiser O."/>
            <person name="Martinez-Arias R."/>
        </authorList>
    </citation>
    <scope>NUCLEOTIDE SEQUENCE [LARGE SCALE GENOMIC DNA]</scope>
    <source>
        <strain>ATCC BAA-461 / DSM 12804 / CCUG 43448</strain>
    </source>
</reference>
<accession>A9I6X6</accession>
<gene>
    <name evidence="1" type="primary">lolB</name>
    <name type="ordered locus">Bpet4004</name>
</gene>
<proteinExistence type="inferred from homology"/>
<evidence type="ECO:0000255" key="1">
    <source>
        <dbReference type="HAMAP-Rule" id="MF_00233"/>
    </source>
</evidence>
<organism>
    <name type="scientific">Bordetella petrii (strain ATCC BAA-461 / DSM 12804 / CCUG 43448)</name>
    <dbReference type="NCBI Taxonomy" id="340100"/>
    <lineage>
        <taxon>Bacteria</taxon>
        <taxon>Pseudomonadati</taxon>
        <taxon>Pseudomonadota</taxon>
        <taxon>Betaproteobacteria</taxon>
        <taxon>Burkholderiales</taxon>
        <taxon>Alcaligenaceae</taxon>
        <taxon>Bordetella</taxon>
    </lineage>
</organism>
<name>LOLB_BORPD</name>
<protein>
    <recommendedName>
        <fullName evidence="1">Outer-membrane lipoprotein LolB</fullName>
    </recommendedName>
</protein>
<dbReference type="EMBL" id="AM902716">
    <property type="protein sequence ID" value="CAP44352.1"/>
    <property type="molecule type" value="Genomic_DNA"/>
</dbReference>
<dbReference type="SMR" id="A9I6X6"/>
<dbReference type="STRING" id="94624.Bpet4004"/>
<dbReference type="KEGG" id="bpt:Bpet4004"/>
<dbReference type="eggNOG" id="COG3017">
    <property type="taxonomic scope" value="Bacteria"/>
</dbReference>
<dbReference type="Proteomes" id="UP000001225">
    <property type="component" value="Chromosome"/>
</dbReference>
<dbReference type="GO" id="GO:0009279">
    <property type="term" value="C:cell outer membrane"/>
    <property type="evidence" value="ECO:0007669"/>
    <property type="project" value="UniProtKB-SubCell"/>
</dbReference>
<dbReference type="GO" id="GO:0044874">
    <property type="term" value="P:lipoprotein localization to outer membrane"/>
    <property type="evidence" value="ECO:0007669"/>
    <property type="project" value="UniProtKB-UniRule"/>
</dbReference>
<dbReference type="GO" id="GO:0015031">
    <property type="term" value="P:protein transport"/>
    <property type="evidence" value="ECO:0007669"/>
    <property type="project" value="UniProtKB-KW"/>
</dbReference>
<dbReference type="CDD" id="cd16326">
    <property type="entry name" value="LolB"/>
    <property type="match status" value="1"/>
</dbReference>
<dbReference type="Gene3D" id="2.50.20.10">
    <property type="entry name" value="Lipoprotein localisation LolA/LolB/LppX"/>
    <property type="match status" value="1"/>
</dbReference>
<dbReference type="HAMAP" id="MF_00233">
    <property type="entry name" value="LolB"/>
    <property type="match status" value="1"/>
</dbReference>
<dbReference type="InterPro" id="IPR029046">
    <property type="entry name" value="LolA/LolB/LppX"/>
</dbReference>
<dbReference type="InterPro" id="IPR004565">
    <property type="entry name" value="OM_lipoprot_LolB"/>
</dbReference>
<dbReference type="NCBIfam" id="TIGR00548">
    <property type="entry name" value="lolB"/>
    <property type="match status" value="1"/>
</dbReference>
<dbReference type="Pfam" id="PF03550">
    <property type="entry name" value="LolB"/>
    <property type="match status" value="1"/>
</dbReference>
<dbReference type="SUPFAM" id="SSF89392">
    <property type="entry name" value="Prokaryotic lipoproteins and lipoprotein localization factors"/>
    <property type="match status" value="1"/>
</dbReference>
<feature type="signal peptide" evidence="1">
    <location>
        <begin position="1"/>
        <end position="28"/>
    </location>
</feature>
<feature type="chain" id="PRO_1000100490" description="Outer-membrane lipoprotein LolB">
    <location>
        <begin position="29"/>
        <end position="199"/>
    </location>
</feature>
<feature type="lipid moiety-binding region" description="N-palmitoyl cysteine" evidence="1">
    <location>
        <position position="29"/>
    </location>
</feature>
<feature type="lipid moiety-binding region" description="S-diacylglycerol cysteine" evidence="1">
    <location>
        <position position="29"/>
    </location>
</feature>
<keyword id="KW-0998">Cell outer membrane</keyword>
<keyword id="KW-0143">Chaperone</keyword>
<keyword id="KW-0449">Lipoprotein</keyword>
<keyword id="KW-0472">Membrane</keyword>
<keyword id="KW-0564">Palmitate</keyword>
<keyword id="KW-0653">Protein transport</keyword>
<keyword id="KW-0732">Signal</keyword>
<keyword id="KW-0813">Transport</keyword>
<sequence length="199" mass="21026">MAAAGSLCQTAWRVRGWLAAGLCALLAGCASVPDAPSGTAEGAFSRGGRFAITMTESSGEQQAVQGGFTWRDDGRRYQLDLTNPLGSTEARVEGRPGHATLTKADGTVLQADTPDALVEEALGSPVPVSGLRDWLRGRVADDAPAGKLQSDAQGRPLSFEQDGWQARLSRYDDQGPGLLVLQRTEPGRRIVVRLAVSQP</sequence>